<sequence>MGKTIQVFGFPNGVSAEEVKKFLERLTGSGTVYAIKVRQPKKGGPRVYAIVQFTSERHTRLIITAAAERLYYGRSYLKAFEVEQDIVPKPRASLHTISGLKMFFGCQVSTKKFLTLWSAQDVCVSFGIGMRKLHFSFSWYQKDYRLELSYENIWQIDLHSPQGRSSKFLVIQVIGAPKIFEKEDQPINLLFGIMDFYSDGSDEQWIRTTDFTSSSCIGQSTAFCLELPVHLNVPDFRENFANYAEHRASSFLIESGSSYSSNANTLVPVVDPPPGFSLPFEILFKLNTLVQNACLSGPALDLDFYRLLNQKKYDRALIDHCLEKLFHLGECCYEPAHWLRDEYKKWISKGKLPLSPTISLDDGLVYMYRVQVTPARVYFSGPEVNVSNRVLRHYSKYINNFLRVSFVDEDLEKVRSMDLSPRSSTQRRTKLYDRIYSVLRDGIVIGDKKFEFLAFSSSQLRENSAWMFAPIDRITAAHIRAWMGDFDHIRNVAKYAARLGQSFSSSRETLNVRSDEIEVIPDVEIISLGTRYVFSDGIGKISAEFARKVARKCGLTEFSPSAFQIRYGGYKGVVAVDPNSSKKLSLRKSMSKFESENTKLDVLAWSKYQPCYMNRQLITLLSTLGVTDSVFEKKQREVVDRLDAILTHPLEAHEALGLMAPGENTNILKALILCGYKPDAEPFLSMMLQNFRASKLLELRTKTRIFISGGRSMMGCLDETRTLEYGQVVVQYSDPMRPGRRFIITGPVVVAKNPCLHPGDVRVLQAVNVPALNHMVDCVVFPQKGLRPHPNECSGSDLDGDIYFVCWDQELVPPRTSEPMDYTPEPTQILDHDVTIEEVEEYFANYIVNDSLGIIANAHTAFADKEPLKAFSDPCIELAKKFSTAVDFPKTGVAAVIPQHLYVKEYPDFMEKPDKPTYESKNVIGKLFREVKERAPPLISIKSFTLDVASKSYDKDMEVDGFEEYVDEAFYQKANYDFKLGNLMDYYGIKTEAEILSGGIMRMSKSFTKRRDAESIGRAVRALRKETLSLFNASEEEENESAKASAWYHVTYHSSYWGLYNEGLNRDHFLSFAWCVYDKLVRIKKTNLGRRQRQETLERLDHVLRFG</sequence>
<reference key="1">
    <citation type="journal article" date="2003" name="Mol. Plant Microbe Interact.">
        <title>Analysis of the involvement of an inducible Arabidopsis RNA-dependent RNA polymerase in antiviral defense.</title>
        <authorList>
            <person name="Yu D."/>
            <person name="Fan B."/>
            <person name="MacFarlane S.A."/>
            <person name="Chen Z."/>
        </authorList>
    </citation>
    <scope>NUCLEOTIDE SEQUENCE [MRNA]</scope>
    <scope>FUNCTION</scope>
    <scope>DISRUPTION PHENOTYPE</scope>
</reference>
<reference key="2">
    <citation type="journal article" date="2000" name="Nature">
        <title>Sequence and analysis of chromosome 1 of the plant Arabidopsis thaliana.</title>
        <authorList>
            <person name="Theologis A."/>
            <person name="Ecker J.R."/>
            <person name="Palm C.J."/>
            <person name="Federspiel N.A."/>
            <person name="Kaul S."/>
            <person name="White O."/>
            <person name="Alonso J."/>
            <person name="Altafi H."/>
            <person name="Araujo R."/>
            <person name="Bowman C.L."/>
            <person name="Brooks S.Y."/>
            <person name="Buehler E."/>
            <person name="Chan A."/>
            <person name="Chao Q."/>
            <person name="Chen H."/>
            <person name="Cheuk R.F."/>
            <person name="Chin C.W."/>
            <person name="Chung M.K."/>
            <person name="Conn L."/>
            <person name="Conway A.B."/>
            <person name="Conway A.R."/>
            <person name="Creasy T.H."/>
            <person name="Dewar K."/>
            <person name="Dunn P."/>
            <person name="Etgu P."/>
            <person name="Feldblyum T.V."/>
            <person name="Feng J.-D."/>
            <person name="Fong B."/>
            <person name="Fujii C.Y."/>
            <person name="Gill J.E."/>
            <person name="Goldsmith A.D."/>
            <person name="Haas B."/>
            <person name="Hansen N.F."/>
            <person name="Hughes B."/>
            <person name="Huizar L."/>
            <person name="Hunter J.L."/>
            <person name="Jenkins J."/>
            <person name="Johnson-Hopson C."/>
            <person name="Khan S."/>
            <person name="Khaykin E."/>
            <person name="Kim C.J."/>
            <person name="Koo H.L."/>
            <person name="Kremenetskaia I."/>
            <person name="Kurtz D.B."/>
            <person name="Kwan A."/>
            <person name="Lam B."/>
            <person name="Langin-Hooper S."/>
            <person name="Lee A."/>
            <person name="Lee J.M."/>
            <person name="Lenz C.A."/>
            <person name="Li J.H."/>
            <person name="Li Y.-P."/>
            <person name="Lin X."/>
            <person name="Liu S.X."/>
            <person name="Liu Z.A."/>
            <person name="Luros J.S."/>
            <person name="Maiti R."/>
            <person name="Marziali A."/>
            <person name="Militscher J."/>
            <person name="Miranda M."/>
            <person name="Nguyen M."/>
            <person name="Nierman W.C."/>
            <person name="Osborne B.I."/>
            <person name="Pai G."/>
            <person name="Peterson J."/>
            <person name="Pham P.K."/>
            <person name="Rizzo M."/>
            <person name="Rooney T."/>
            <person name="Rowley D."/>
            <person name="Sakano H."/>
            <person name="Salzberg S.L."/>
            <person name="Schwartz J.R."/>
            <person name="Shinn P."/>
            <person name="Southwick A.M."/>
            <person name="Sun H."/>
            <person name="Tallon L.J."/>
            <person name="Tambunga G."/>
            <person name="Toriumi M.J."/>
            <person name="Town C.D."/>
            <person name="Utterback T."/>
            <person name="Van Aken S."/>
            <person name="Vaysberg M."/>
            <person name="Vysotskaia V.S."/>
            <person name="Walker M."/>
            <person name="Wu D."/>
            <person name="Yu G."/>
            <person name="Fraser C.M."/>
            <person name="Venter J.C."/>
            <person name="Davis R.W."/>
        </authorList>
    </citation>
    <scope>NUCLEOTIDE SEQUENCE [LARGE SCALE GENOMIC DNA]</scope>
    <source>
        <strain>cv. Columbia</strain>
    </source>
</reference>
<reference key="3">
    <citation type="journal article" date="2017" name="Plant J.">
        <title>Araport11: a complete reannotation of the Arabidopsis thaliana reference genome.</title>
        <authorList>
            <person name="Cheng C.Y."/>
            <person name="Krishnakumar V."/>
            <person name="Chan A.P."/>
            <person name="Thibaud-Nissen F."/>
            <person name="Schobel S."/>
            <person name="Town C.D."/>
        </authorList>
    </citation>
    <scope>GENOME REANNOTATION</scope>
    <source>
        <strain>cv. Columbia</strain>
    </source>
</reference>
<reference key="4">
    <citation type="submission" date="2006-07" db="EMBL/GenBank/DDBJ databases">
        <title>Large-scale analysis of RIKEN Arabidopsis full-length (RAFL) cDNAs.</title>
        <authorList>
            <person name="Totoki Y."/>
            <person name="Seki M."/>
            <person name="Ishida J."/>
            <person name="Nakajima M."/>
            <person name="Enju A."/>
            <person name="Kamiya A."/>
            <person name="Narusaka M."/>
            <person name="Shin-i T."/>
            <person name="Nakagawa M."/>
            <person name="Sakamoto N."/>
            <person name="Oishi K."/>
            <person name="Kohara Y."/>
            <person name="Kobayashi M."/>
            <person name="Toyoda A."/>
            <person name="Sakaki Y."/>
            <person name="Sakurai T."/>
            <person name="Iida K."/>
            <person name="Akiyama K."/>
            <person name="Satou M."/>
            <person name="Toyoda T."/>
            <person name="Konagaya A."/>
            <person name="Carninci P."/>
            <person name="Kawai J."/>
            <person name="Hayashizaki Y."/>
            <person name="Shinozaki K."/>
        </authorList>
    </citation>
    <scope>NUCLEOTIDE SEQUENCE [LARGE SCALE MRNA]</scope>
    <source>
        <strain>cv. Columbia</strain>
    </source>
</reference>
<reference key="5">
    <citation type="journal article" date="1998" name="Plant Cell">
        <title>Isolation of an RNA-directed RNA polymerase-specific cDNA clone from tomato.</title>
        <authorList>
            <person name="Schiebel W."/>
            <person name="Pelissier T."/>
            <person name="Riedel L."/>
            <person name="Thalmeir S."/>
            <person name="Schiebel R."/>
            <person name="Kempe D."/>
            <person name="Lottspeich F."/>
            <person name="Saenger H.L."/>
            <person name="Wassenegger M."/>
        </authorList>
    </citation>
    <scope>NUCLEOTIDE SEQUENCE [GENOMIC DNA] OF 479-991</scope>
    <source>
        <strain>cv. Columbia</strain>
        <tissue>Leaf</tissue>
    </source>
</reference>
<reference key="6">
    <citation type="journal article" date="2009" name="PLoS ONE">
        <title>Small RNA deep sequencing reveals role for Arabidopsis thaliana RNA-dependent RNA polymerases in viral siRNA biogenesis.</title>
        <authorList>
            <person name="Qi X."/>
            <person name="Bao F.S."/>
            <person name="Xie Z."/>
        </authorList>
    </citation>
    <scope>FUNCTION</scope>
</reference>
<reference key="7">
    <citation type="journal article" date="2010" name="Plant Cell">
        <title>Arabidopsis RNA-dependent RNA polymerases and dicer-like proteins in antiviral defense and small interfering RNA biogenesis during turnip mosaic virus infection.</title>
        <authorList>
            <person name="Garcia-Ruiz H."/>
            <person name="Takeda A."/>
            <person name="Chapman E.J."/>
            <person name="Sullivan C.M."/>
            <person name="Fahlgren N."/>
            <person name="Brempelis K.J."/>
            <person name="Carrington J.C."/>
        </authorList>
    </citation>
    <scope>FUNCTION</scope>
    <scope>DISRUPTION PHENOTYPE</scope>
</reference>
<reference key="8">
    <citation type="journal article" date="2010" name="Proc. Natl. Acad. Sci. U.S.A.">
        <title>RNAi-mediated viral immunity requires amplification of virus-derived siRNAs in Arabidopsis thaliana.</title>
        <authorList>
            <person name="Wang X.B."/>
            <person name="Wu Q."/>
            <person name="Ito T."/>
            <person name="Cillo F."/>
            <person name="Li W.X."/>
            <person name="Chen X."/>
            <person name="Yu J.L."/>
            <person name="Ding S.W."/>
        </authorList>
    </citation>
    <scope>FUNCTION</scope>
    <scope>DISRUPTION PHENOTYPE</scope>
</reference>
<dbReference type="EC" id="2.7.7.48"/>
<dbReference type="EMBL" id="AY148431">
    <property type="protein sequence ID" value="AAN64409.1"/>
    <property type="molecule type" value="mRNA"/>
</dbReference>
<dbReference type="EMBL" id="AC006917">
    <property type="protein sequence ID" value="AAF79241.1"/>
    <property type="molecule type" value="Genomic_DNA"/>
</dbReference>
<dbReference type="EMBL" id="CP002684">
    <property type="protein sequence ID" value="AEE29226.1"/>
    <property type="molecule type" value="Genomic_DNA"/>
</dbReference>
<dbReference type="EMBL" id="AK228731">
    <property type="protein sequence ID" value="BAF00633.1"/>
    <property type="molecule type" value="mRNA"/>
</dbReference>
<dbReference type="EMBL" id="AJ011977">
    <property type="protein sequence ID" value="CAA09894.1"/>
    <property type="molecule type" value="Genomic_DNA"/>
</dbReference>
<dbReference type="RefSeq" id="NP_172932.1">
    <property type="nucleotide sequence ID" value="NM_101348.4"/>
</dbReference>
<dbReference type="SMR" id="Q9LQV2"/>
<dbReference type="FunCoup" id="Q9LQV2">
    <property type="interactions" value="49"/>
</dbReference>
<dbReference type="STRING" id="3702.Q9LQV2"/>
<dbReference type="GlyGen" id="Q9LQV2">
    <property type="glycosylation" value="1 site"/>
</dbReference>
<dbReference type="iPTMnet" id="Q9LQV2"/>
<dbReference type="PaxDb" id="3702-AT1G14790.1"/>
<dbReference type="ProteomicsDB" id="235102"/>
<dbReference type="EnsemblPlants" id="AT1G14790.1">
    <property type="protein sequence ID" value="AT1G14790.1"/>
    <property type="gene ID" value="AT1G14790"/>
</dbReference>
<dbReference type="GeneID" id="838044"/>
<dbReference type="Gramene" id="AT1G14790.1">
    <property type="protein sequence ID" value="AT1G14790.1"/>
    <property type="gene ID" value="AT1G14790"/>
</dbReference>
<dbReference type="KEGG" id="ath:AT1G14790"/>
<dbReference type="Araport" id="AT1G14790"/>
<dbReference type="TAIR" id="AT1G14790">
    <property type="gene designation" value="RDR1"/>
</dbReference>
<dbReference type="eggNOG" id="KOG0988">
    <property type="taxonomic scope" value="Eukaryota"/>
</dbReference>
<dbReference type="HOGENOM" id="CLU_001366_3_0_1"/>
<dbReference type="InParanoid" id="Q9LQV2"/>
<dbReference type="OMA" id="KYQPGFL"/>
<dbReference type="OrthoDB" id="6513042at2759"/>
<dbReference type="PhylomeDB" id="Q9LQV2"/>
<dbReference type="BRENDA" id="2.7.7.48">
    <property type="organism ID" value="399"/>
</dbReference>
<dbReference type="PRO" id="PR:Q9LQV2"/>
<dbReference type="Proteomes" id="UP000006548">
    <property type="component" value="Chromosome 1"/>
</dbReference>
<dbReference type="ExpressionAtlas" id="Q9LQV2">
    <property type="expression patterns" value="baseline and differential"/>
</dbReference>
<dbReference type="GO" id="GO:0003723">
    <property type="term" value="F:RNA binding"/>
    <property type="evidence" value="ECO:0007669"/>
    <property type="project" value="UniProtKB-KW"/>
</dbReference>
<dbReference type="GO" id="GO:0003968">
    <property type="term" value="F:RNA-directed RNA polymerase activity"/>
    <property type="evidence" value="ECO:0007669"/>
    <property type="project" value="UniProtKB-KW"/>
</dbReference>
<dbReference type="GO" id="GO:0006952">
    <property type="term" value="P:defense response"/>
    <property type="evidence" value="ECO:0007669"/>
    <property type="project" value="UniProtKB-KW"/>
</dbReference>
<dbReference type="GO" id="GO:0060148">
    <property type="term" value="P:positive regulation of post-transcriptional gene silencing"/>
    <property type="evidence" value="ECO:0000315"/>
    <property type="project" value="TAIR"/>
</dbReference>
<dbReference type="GO" id="GO:0009751">
    <property type="term" value="P:response to salicylic acid"/>
    <property type="evidence" value="ECO:0000270"/>
    <property type="project" value="TAIR"/>
</dbReference>
<dbReference type="GO" id="GO:0009615">
    <property type="term" value="P:response to virus"/>
    <property type="evidence" value="ECO:0000315"/>
    <property type="project" value="TAIR"/>
</dbReference>
<dbReference type="GO" id="GO:0030422">
    <property type="term" value="P:siRNA processing"/>
    <property type="evidence" value="ECO:0000315"/>
    <property type="project" value="CACAO"/>
</dbReference>
<dbReference type="GO" id="GO:0010025">
    <property type="term" value="P:wax biosynthetic process"/>
    <property type="evidence" value="ECO:0000316"/>
    <property type="project" value="TAIR"/>
</dbReference>
<dbReference type="InterPro" id="IPR035979">
    <property type="entry name" value="RBD_domain_sf"/>
</dbReference>
<dbReference type="InterPro" id="IPR007855">
    <property type="entry name" value="RNA-dep_RNA_pol_euk-typ"/>
</dbReference>
<dbReference type="PANTHER" id="PTHR23079">
    <property type="entry name" value="RNA-DEPENDENT RNA POLYMERASE"/>
    <property type="match status" value="1"/>
</dbReference>
<dbReference type="PANTHER" id="PTHR23079:SF1">
    <property type="entry name" value="RNA-DEPENDENT RNA POLYMERASE 1"/>
    <property type="match status" value="1"/>
</dbReference>
<dbReference type="Pfam" id="PF05183">
    <property type="entry name" value="RdRP"/>
    <property type="match status" value="1"/>
</dbReference>
<dbReference type="SUPFAM" id="SSF54928">
    <property type="entry name" value="RNA-binding domain, RBD"/>
    <property type="match status" value="1"/>
</dbReference>
<comment type="function">
    <text evidence="1 2 3 4">RNA-dependent direct polymerase involved in antiviral silencing. Required for the production of some small RNAs (mainly 21 and some 22 nucleotides) derived from the crucifer-infecting tobamovirus (TMV-cg). Required for turnip mosaic virus (TuMV) silencing and accumulation of viral siRNAs. Involved in cucumber mosaic virus (CMV) silencing. Required for the biogenesis of viral secondary siRNAs, process that follows the production of primary siRNAs derived from viral RNA replication. Specifically targets the positive-strand of the 3 RNA genomes of CMV and preferentially amplifies the 5'-terminal siRNAs of each viral genomic RNA. Not involved in the production of siRNAs derived from a single-stranded 336-nucleotide satellite RNA of CMV.</text>
</comment>
<comment type="catalytic activity">
    <reaction>
        <text>RNA(n) + a ribonucleoside 5'-triphosphate = RNA(n+1) + diphosphate</text>
        <dbReference type="Rhea" id="RHEA:21248"/>
        <dbReference type="Rhea" id="RHEA-COMP:14527"/>
        <dbReference type="Rhea" id="RHEA-COMP:17342"/>
        <dbReference type="ChEBI" id="CHEBI:33019"/>
        <dbReference type="ChEBI" id="CHEBI:61557"/>
        <dbReference type="ChEBI" id="CHEBI:140395"/>
        <dbReference type="EC" id="2.7.7.48"/>
    </reaction>
</comment>
<comment type="induction">
    <text>By salicylic acid (SA) and infection by a crucifer-infecting tobamovirus (TMV-cg).</text>
</comment>
<comment type="disruption phenotype">
    <text evidence="1 3 4">Upon viral infection, increased levels of TMV-cg, tobacco rattle virus (TRV) and CMV genomic viral RNAs. Reduced levels of TMV-cg-derived small RNAs and CMV-derived siRNAs.</text>
</comment>
<comment type="similarity">
    <text evidence="5">Belongs to the RdRP family.</text>
</comment>
<name>RDR1_ARATH</name>
<organism>
    <name type="scientific">Arabidopsis thaliana</name>
    <name type="common">Mouse-ear cress</name>
    <dbReference type="NCBI Taxonomy" id="3702"/>
    <lineage>
        <taxon>Eukaryota</taxon>
        <taxon>Viridiplantae</taxon>
        <taxon>Streptophyta</taxon>
        <taxon>Embryophyta</taxon>
        <taxon>Tracheophyta</taxon>
        <taxon>Spermatophyta</taxon>
        <taxon>Magnoliopsida</taxon>
        <taxon>eudicotyledons</taxon>
        <taxon>Gunneridae</taxon>
        <taxon>Pentapetalae</taxon>
        <taxon>rosids</taxon>
        <taxon>malvids</taxon>
        <taxon>Brassicales</taxon>
        <taxon>Brassicaceae</taxon>
        <taxon>Camelineae</taxon>
        <taxon>Arabidopsis</taxon>
    </lineage>
</organism>
<proteinExistence type="evidence at transcript level"/>
<evidence type="ECO:0000269" key="1">
    <source>
    </source>
</evidence>
<evidence type="ECO:0000269" key="2">
    <source>
    </source>
</evidence>
<evidence type="ECO:0000269" key="3">
    <source>
    </source>
</evidence>
<evidence type="ECO:0000269" key="4">
    <source>
    </source>
</evidence>
<evidence type="ECO:0000305" key="5"/>
<gene>
    <name type="primary">RDR1</name>
    <name type="synonym">RDRP1</name>
    <name type="ordered locus">At1g14790</name>
    <name type="ORF">F10B6.19</name>
</gene>
<protein>
    <recommendedName>
        <fullName>RNA-dependent RNA polymerase 1</fullName>
        <shortName>AtRDRP1</shortName>
        <ecNumber>2.7.7.48</ecNumber>
    </recommendedName>
    <alternativeName>
        <fullName>RNA-directed RNA polymerase 1</fullName>
    </alternativeName>
</protein>
<keyword id="KW-0548">Nucleotidyltransferase</keyword>
<keyword id="KW-0611">Plant defense</keyword>
<keyword id="KW-1185">Reference proteome</keyword>
<keyword id="KW-0694">RNA-binding</keyword>
<keyword id="KW-0696">RNA-directed RNA polymerase</keyword>
<keyword id="KW-0943">RNA-mediated gene silencing</keyword>
<keyword id="KW-0808">Transferase</keyword>
<accession>Q9LQV2</accession>
<accession>Q8H1K9</accession>
<accession>Q9ZRX5</accession>
<feature type="chain" id="PRO_0000404672" description="RNA-dependent RNA polymerase 1">
    <location>
        <begin position="1"/>
        <end position="1107"/>
    </location>
</feature>
<feature type="sequence conflict" description="In Ref. 1; AAN64409 and 5; CAA09894." evidence="5" ref="1 5">
    <original>P</original>
    <variation>S</variation>
    <location>
        <position position="758"/>
    </location>
</feature>